<dbReference type="EC" id="5.2.1.8" evidence="1"/>
<dbReference type="EMBL" id="CP000075">
    <property type="protein sequence ID" value="AAY36794.1"/>
    <property type="molecule type" value="Genomic_DNA"/>
</dbReference>
<dbReference type="RefSeq" id="WP_011267215.1">
    <property type="nucleotide sequence ID" value="NC_007005.1"/>
</dbReference>
<dbReference type="RefSeq" id="YP_234832.1">
    <property type="nucleotide sequence ID" value="NC_007005.1"/>
</dbReference>
<dbReference type="SMR" id="Q4ZVM8"/>
<dbReference type="STRING" id="205918.Psyr_1746"/>
<dbReference type="KEGG" id="psb:Psyr_1746"/>
<dbReference type="PATRIC" id="fig|205918.7.peg.1784"/>
<dbReference type="eggNOG" id="COG0544">
    <property type="taxonomic scope" value="Bacteria"/>
</dbReference>
<dbReference type="HOGENOM" id="CLU_033058_2_0_6"/>
<dbReference type="OrthoDB" id="9767721at2"/>
<dbReference type="Proteomes" id="UP000000426">
    <property type="component" value="Chromosome"/>
</dbReference>
<dbReference type="GO" id="GO:0005737">
    <property type="term" value="C:cytoplasm"/>
    <property type="evidence" value="ECO:0007669"/>
    <property type="project" value="UniProtKB-SubCell"/>
</dbReference>
<dbReference type="GO" id="GO:0003755">
    <property type="term" value="F:peptidyl-prolyl cis-trans isomerase activity"/>
    <property type="evidence" value="ECO:0007669"/>
    <property type="project" value="UniProtKB-UniRule"/>
</dbReference>
<dbReference type="GO" id="GO:0044183">
    <property type="term" value="F:protein folding chaperone"/>
    <property type="evidence" value="ECO:0007669"/>
    <property type="project" value="TreeGrafter"/>
</dbReference>
<dbReference type="GO" id="GO:0043022">
    <property type="term" value="F:ribosome binding"/>
    <property type="evidence" value="ECO:0007669"/>
    <property type="project" value="TreeGrafter"/>
</dbReference>
<dbReference type="GO" id="GO:0051083">
    <property type="term" value="P:'de novo' cotranslational protein folding"/>
    <property type="evidence" value="ECO:0007669"/>
    <property type="project" value="TreeGrafter"/>
</dbReference>
<dbReference type="GO" id="GO:0051301">
    <property type="term" value="P:cell division"/>
    <property type="evidence" value="ECO:0007669"/>
    <property type="project" value="UniProtKB-KW"/>
</dbReference>
<dbReference type="GO" id="GO:0061077">
    <property type="term" value="P:chaperone-mediated protein folding"/>
    <property type="evidence" value="ECO:0007669"/>
    <property type="project" value="TreeGrafter"/>
</dbReference>
<dbReference type="GO" id="GO:0015031">
    <property type="term" value="P:protein transport"/>
    <property type="evidence" value="ECO:0007669"/>
    <property type="project" value="UniProtKB-UniRule"/>
</dbReference>
<dbReference type="GO" id="GO:0043335">
    <property type="term" value="P:protein unfolding"/>
    <property type="evidence" value="ECO:0007669"/>
    <property type="project" value="TreeGrafter"/>
</dbReference>
<dbReference type="FunFam" id="3.10.50.40:FF:000001">
    <property type="entry name" value="Trigger factor"/>
    <property type="match status" value="1"/>
</dbReference>
<dbReference type="FunFam" id="3.30.70.1050:FF:000001">
    <property type="entry name" value="Trigger factor"/>
    <property type="match status" value="1"/>
</dbReference>
<dbReference type="Gene3D" id="3.10.50.40">
    <property type="match status" value="1"/>
</dbReference>
<dbReference type="Gene3D" id="3.30.70.1050">
    <property type="entry name" value="Trigger factor ribosome-binding domain"/>
    <property type="match status" value="1"/>
</dbReference>
<dbReference type="Gene3D" id="1.10.3120.10">
    <property type="entry name" value="Trigger factor, C-terminal domain"/>
    <property type="match status" value="1"/>
</dbReference>
<dbReference type="HAMAP" id="MF_00303">
    <property type="entry name" value="Trigger_factor_Tig"/>
    <property type="match status" value="1"/>
</dbReference>
<dbReference type="InterPro" id="IPR046357">
    <property type="entry name" value="PPIase_dom_sf"/>
</dbReference>
<dbReference type="InterPro" id="IPR001179">
    <property type="entry name" value="PPIase_FKBP_dom"/>
</dbReference>
<dbReference type="InterPro" id="IPR005215">
    <property type="entry name" value="Trig_fac"/>
</dbReference>
<dbReference type="InterPro" id="IPR008880">
    <property type="entry name" value="Trigger_fac_C"/>
</dbReference>
<dbReference type="InterPro" id="IPR037041">
    <property type="entry name" value="Trigger_fac_C_sf"/>
</dbReference>
<dbReference type="InterPro" id="IPR008881">
    <property type="entry name" value="Trigger_fac_ribosome-bd_bac"/>
</dbReference>
<dbReference type="InterPro" id="IPR036611">
    <property type="entry name" value="Trigger_fac_ribosome-bd_sf"/>
</dbReference>
<dbReference type="InterPro" id="IPR027304">
    <property type="entry name" value="Trigger_fact/SurA_dom_sf"/>
</dbReference>
<dbReference type="NCBIfam" id="TIGR00115">
    <property type="entry name" value="tig"/>
    <property type="match status" value="1"/>
</dbReference>
<dbReference type="PANTHER" id="PTHR30560">
    <property type="entry name" value="TRIGGER FACTOR CHAPERONE AND PEPTIDYL-PROLYL CIS/TRANS ISOMERASE"/>
    <property type="match status" value="1"/>
</dbReference>
<dbReference type="PANTHER" id="PTHR30560:SF3">
    <property type="entry name" value="TRIGGER FACTOR-LIKE PROTEIN TIG, CHLOROPLASTIC"/>
    <property type="match status" value="1"/>
</dbReference>
<dbReference type="Pfam" id="PF00254">
    <property type="entry name" value="FKBP_C"/>
    <property type="match status" value="1"/>
</dbReference>
<dbReference type="Pfam" id="PF05698">
    <property type="entry name" value="Trigger_C"/>
    <property type="match status" value="1"/>
</dbReference>
<dbReference type="Pfam" id="PF05697">
    <property type="entry name" value="Trigger_N"/>
    <property type="match status" value="1"/>
</dbReference>
<dbReference type="PIRSF" id="PIRSF003095">
    <property type="entry name" value="Trigger_factor"/>
    <property type="match status" value="1"/>
</dbReference>
<dbReference type="SUPFAM" id="SSF54534">
    <property type="entry name" value="FKBP-like"/>
    <property type="match status" value="1"/>
</dbReference>
<dbReference type="SUPFAM" id="SSF109998">
    <property type="entry name" value="Triger factor/SurA peptide-binding domain-like"/>
    <property type="match status" value="1"/>
</dbReference>
<dbReference type="SUPFAM" id="SSF102735">
    <property type="entry name" value="Trigger factor ribosome-binding domain"/>
    <property type="match status" value="1"/>
</dbReference>
<dbReference type="PROSITE" id="PS50059">
    <property type="entry name" value="FKBP_PPIASE"/>
    <property type="match status" value="1"/>
</dbReference>
<organism>
    <name type="scientific">Pseudomonas syringae pv. syringae (strain B728a)</name>
    <dbReference type="NCBI Taxonomy" id="205918"/>
    <lineage>
        <taxon>Bacteria</taxon>
        <taxon>Pseudomonadati</taxon>
        <taxon>Pseudomonadota</taxon>
        <taxon>Gammaproteobacteria</taxon>
        <taxon>Pseudomonadales</taxon>
        <taxon>Pseudomonadaceae</taxon>
        <taxon>Pseudomonas</taxon>
        <taxon>Pseudomonas syringae</taxon>
    </lineage>
</organism>
<gene>
    <name evidence="1" type="primary">tig</name>
    <name type="ordered locus">Psyr_1746</name>
</gene>
<feature type="chain" id="PRO_0000256595" description="Trigger factor">
    <location>
        <begin position="1"/>
        <end position="436"/>
    </location>
</feature>
<feature type="domain" description="PPIase FKBP-type" evidence="1">
    <location>
        <begin position="161"/>
        <end position="246"/>
    </location>
</feature>
<accession>Q4ZVM8</accession>
<name>TIG_PSEU2</name>
<evidence type="ECO:0000255" key="1">
    <source>
        <dbReference type="HAMAP-Rule" id="MF_00303"/>
    </source>
</evidence>
<protein>
    <recommendedName>
        <fullName evidence="1">Trigger factor</fullName>
        <shortName evidence="1">TF</shortName>
        <ecNumber evidence="1">5.2.1.8</ecNumber>
    </recommendedName>
    <alternativeName>
        <fullName evidence="1">PPIase</fullName>
    </alternativeName>
</protein>
<comment type="function">
    <text evidence="1">Involved in protein export. Acts as a chaperone by maintaining the newly synthesized protein in an open conformation. Functions as a peptidyl-prolyl cis-trans isomerase.</text>
</comment>
<comment type="catalytic activity">
    <reaction evidence="1">
        <text>[protein]-peptidylproline (omega=180) = [protein]-peptidylproline (omega=0)</text>
        <dbReference type="Rhea" id="RHEA:16237"/>
        <dbReference type="Rhea" id="RHEA-COMP:10747"/>
        <dbReference type="Rhea" id="RHEA-COMP:10748"/>
        <dbReference type="ChEBI" id="CHEBI:83833"/>
        <dbReference type="ChEBI" id="CHEBI:83834"/>
        <dbReference type="EC" id="5.2.1.8"/>
    </reaction>
</comment>
<comment type="subcellular location">
    <subcellularLocation>
        <location>Cytoplasm</location>
    </subcellularLocation>
    <text evidence="1">About half TF is bound to the ribosome near the polypeptide exit tunnel while the other half is free in the cytoplasm.</text>
</comment>
<comment type="domain">
    <text evidence="1">Consists of 3 domains; the N-terminus binds the ribosome, the middle domain has PPIase activity, while the C-terminus has intrinsic chaperone activity on its own.</text>
</comment>
<comment type="similarity">
    <text evidence="1">Belongs to the FKBP-type PPIase family. Tig subfamily.</text>
</comment>
<proteinExistence type="inferred from homology"/>
<keyword id="KW-0131">Cell cycle</keyword>
<keyword id="KW-0132">Cell division</keyword>
<keyword id="KW-0143">Chaperone</keyword>
<keyword id="KW-0963">Cytoplasm</keyword>
<keyword id="KW-0413">Isomerase</keyword>
<keyword id="KW-0697">Rotamase</keyword>
<sequence length="436" mass="48674">MQVSVENTSALERRMTIGVPAERIETEVNKRLQQTARKAKIPGFRPGKVPMSVIRQRYEDGARQEALGDLIQATFYEAVVEQKLNPAGAPAVEPKSFEKGKDLEYVATFEVFPEFTVAGFDSISVERLSADVADSDLDNMLEVLRKQNVRFEVTDRAAQNEDQLNIDFVGKVDGEVFAGGSATGTQLVLGSGRMIPGFEDGLVGAKAGEERVLNVTFPEDYQNLELAGKAAEFTVTVNTVSEPKLPELNEEFFKQFGIKETGIEGFRTEVRKNMERELRQAIKSKVKNQVMDGLLAANPIEVPKALLENEVNRLRVQAVQQFGGNIKPDQLPAELFEEQAKRRVELGLIVAEVVKQFDLKPDDARVREMIQEMASAYQEPEQVVAWYYKNEQQMNEVRSVVLEEQVVDTVLQKASVTDKSVSYEEAVKPVEAPKAD</sequence>
<reference key="1">
    <citation type="journal article" date="2005" name="Proc. Natl. Acad. Sci. U.S.A.">
        <title>Comparison of the complete genome sequences of Pseudomonas syringae pv. syringae B728a and pv. tomato DC3000.</title>
        <authorList>
            <person name="Feil H."/>
            <person name="Feil W.S."/>
            <person name="Chain P."/>
            <person name="Larimer F."/>
            <person name="Dibartolo G."/>
            <person name="Copeland A."/>
            <person name="Lykidis A."/>
            <person name="Trong S."/>
            <person name="Nolan M."/>
            <person name="Goltsman E."/>
            <person name="Thiel J."/>
            <person name="Malfatti S."/>
            <person name="Loper J.E."/>
            <person name="Lapidus A."/>
            <person name="Detter J.C."/>
            <person name="Land M."/>
            <person name="Richardson P.M."/>
            <person name="Kyrpides N.C."/>
            <person name="Ivanova N."/>
            <person name="Lindow S.E."/>
        </authorList>
    </citation>
    <scope>NUCLEOTIDE SEQUENCE [LARGE SCALE GENOMIC DNA]</scope>
    <source>
        <strain>B728a</strain>
    </source>
</reference>